<gene>
    <name evidence="1" type="primary">groES</name>
    <name evidence="1" type="synonym">groS</name>
    <name type="ordered locus">Achl_2595</name>
</gene>
<name>CH10_PSECP</name>
<organism>
    <name type="scientific">Pseudarthrobacter chlorophenolicus (strain ATCC 700700 / DSM 12829 / CIP 107037 / JCM 12360 / KCTC 9906 / NCIMB 13794 / A6)</name>
    <name type="common">Arthrobacter chlorophenolicus</name>
    <dbReference type="NCBI Taxonomy" id="452863"/>
    <lineage>
        <taxon>Bacteria</taxon>
        <taxon>Bacillati</taxon>
        <taxon>Actinomycetota</taxon>
        <taxon>Actinomycetes</taxon>
        <taxon>Micrococcales</taxon>
        <taxon>Micrococcaceae</taxon>
        <taxon>Pseudarthrobacter</taxon>
    </lineage>
</organism>
<comment type="function">
    <text evidence="1">Together with the chaperonin GroEL, plays an essential role in assisting protein folding. The GroEL-GroES system forms a nano-cage that allows encapsulation of the non-native substrate proteins and provides a physical environment optimized to promote and accelerate protein folding. GroES binds to the apical surface of the GroEL ring, thereby capping the opening of the GroEL channel.</text>
</comment>
<comment type="subunit">
    <text evidence="1">Heptamer of 7 subunits arranged in a ring. Interacts with the chaperonin GroEL.</text>
</comment>
<comment type="subcellular location">
    <subcellularLocation>
        <location evidence="1">Cytoplasm</location>
    </subcellularLocation>
</comment>
<comment type="similarity">
    <text evidence="1">Belongs to the GroES chaperonin family.</text>
</comment>
<dbReference type="EMBL" id="CP001341">
    <property type="protein sequence ID" value="ACL40560.1"/>
    <property type="molecule type" value="Genomic_DNA"/>
</dbReference>
<dbReference type="RefSeq" id="WP_015937770.1">
    <property type="nucleotide sequence ID" value="NC_011886.1"/>
</dbReference>
<dbReference type="SMR" id="B8HCE4"/>
<dbReference type="STRING" id="452863.Achl_2595"/>
<dbReference type="KEGG" id="ach:Achl_2595"/>
<dbReference type="eggNOG" id="COG0234">
    <property type="taxonomic scope" value="Bacteria"/>
</dbReference>
<dbReference type="HOGENOM" id="CLU_132825_2_0_11"/>
<dbReference type="OrthoDB" id="9806791at2"/>
<dbReference type="Proteomes" id="UP000002505">
    <property type="component" value="Chromosome"/>
</dbReference>
<dbReference type="GO" id="GO:0005737">
    <property type="term" value="C:cytoplasm"/>
    <property type="evidence" value="ECO:0007669"/>
    <property type="project" value="UniProtKB-SubCell"/>
</dbReference>
<dbReference type="GO" id="GO:0005524">
    <property type="term" value="F:ATP binding"/>
    <property type="evidence" value="ECO:0007669"/>
    <property type="project" value="InterPro"/>
</dbReference>
<dbReference type="GO" id="GO:0046872">
    <property type="term" value="F:metal ion binding"/>
    <property type="evidence" value="ECO:0007669"/>
    <property type="project" value="TreeGrafter"/>
</dbReference>
<dbReference type="GO" id="GO:0044183">
    <property type="term" value="F:protein folding chaperone"/>
    <property type="evidence" value="ECO:0007669"/>
    <property type="project" value="InterPro"/>
</dbReference>
<dbReference type="GO" id="GO:0051087">
    <property type="term" value="F:protein-folding chaperone binding"/>
    <property type="evidence" value="ECO:0007669"/>
    <property type="project" value="TreeGrafter"/>
</dbReference>
<dbReference type="GO" id="GO:0051082">
    <property type="term" value="F:unfolded protein binding"/>
    <property type="evidence" value="ECO:0007669"/>
    <property type="project" value="TreeGrafter"/>
</dbReference>
<dbReference type="GO" id="GO:0051085">
    <property type="term" value="P:chaperone cofactor-dependent protein refolding"/>
    <property type="evidence" value="ECO:0007669"/>
    <property type="project" value="TreeGrafter"/>
</dbReference>
<dbReference type="CDD" id="cd00320">
    <property type="entry name" value="cpn10"/>
    <property type="match status" value="1"/>
</dbReference>
<dbReference type="FunFam" id="2.30.33.40:FF:000001">
    <property type="entry name" value="10 kDa chaperonin"/>
    <property type="match status" value="1"/>
</dbReference>
<dbReference type="Gene3D" id="2.30.33.40">
    <property type="entry name" value="GroES chaperonin"/>
    <property type="match status" value="1"/>
</dbReference>
<dbReference type="HAMAP" id="MF_00580">
    <property type="entry name" value="CH10"/>
    <property type="match status" value="1"/>
</dbReference>
<dbReference type="InterPro" id="IPR020818">
    <property type="entry name" value="Chaperonin_GroES"/>
</dbReference>
<dbReference type="InterPro" id="IPR037124">
    <property type="entry name" value="Chaperonin_GroES_sf"/>
</dbReference>
<dbReference type="InterPro" id="IPR018369">
    <property type="entry name" value="Chaprnonin_Cpn10_CS"/>
</dbReference>
<dbReference type="InterPro" id="IPR011032">
    <property type="entry name" value="GroES-like_sf"/>
</dbReference>
<dbReference type="NCBIfam" id="NF001530">
    <property type="entry name" value="PRK00364.1-6"/>
    <property type="match status" value="1"/>
</dbReference>
<dbReference type="NCBIfam" id="NF001531">
    <property type="entry name" value="PRK00364.2-2"/>
    <property type="match status" value="1"/>
</dbReference>
<dbReference type="NCBIfam" id="NF001533">
    <property type="entry name" value="PRK00364.2-4"/>
    <property type="match status" value="1"/>
</dbReference>
<dbReference type="NCBIfam" id="NF001534">
    <property type="entry name" value="PRK00364.2-5"/>
    <property type="match status" value="1"/>
</dbReference>
<dbReference type="PANTHER" id="PTHR10772">
    <property type="entry name" value="10 KDA HEAT SHOCK PROTEIN"/>
    <property type="match status" value="1"/>
</dbReference>
<dbReference type="PANTHER" id="PTHR10772:SF58">
    <property type="entry name" value="CO-CHAPERONIN GROES"/>
    <property type="match status" value="1"/>
</dbReference>
<dbReference type="Pfam" id="PF00166">
    <property type="entry name" value="Cpn10"/>
    <property type="match status" value="1"/>
</dbReference>
<dbReference type="PRINTS" id="PR00297">
    <property type="entry name" value="CHAPERONIN10"/>
</dbReference>
<dbReference type="SMART" id="SM00883">
    <property type="entry name" value="Cpn10"/>
    <property type="match status" value="1"/>
</dbReference>
<dbReference type="SUPFAM" id="SSF50129">
    <property type="entry name" value="GroES-like"/>
    <property type="match status" value="1"/>
</dbReference>
<dbReference type="PROSITE" id="PS00681">
    <property type="entry name" value="CHAPERONINS_CPN10"/>
    <property type="match status" value="1"/>
</dbReference>
<reference key="1">
    <citation type="submission" date="2009-01" db="EMBL/GenBank/DDBJ databases">
        <title>Complete sequence of chromosome of Arthrobacter chlorophenolicus A6.</title>
        <authorList>
            <consortium name="US DOE Joint Genome Institute"/>
            <person name="Lucas S."/>
            <person name="Copeland A."/>
            <person name="Lapidus A."/>
            <person name="Glavina del Rio T."/>
            <person name="Tice H."/>
            <person name="Bruce D."/>
            <person name="Goodwin L."/>
            <person name="Pitluck S."/>
            <person name="Goltsman E."/>
            <person name="Clum A."/>
            <person name="Larimer F."/>
            <person name="Land M."/>
            <person name="Hauser L."/>
            <person name="Kyrpides N."/>
            <person name="Mikhailova N."/>
            <person name="Jansson J."/>
            <person name="Richardson P."/>
        </authorList>
    </citation>
    <scope>NUCLEOTIDE SEQUENCE [LARGE SCALE GENOMIC DNA]</scope>
    <source>
        <strain>ATCC 700700 / DSM 12829 / CIP 107037 / JCM 12360 / KCTC 9906 / NCIMB 13794 / A6</strain>
    </source>
</reference>
<sequence length="97" mass="10281">MSVSIKPLEDRIVVRPLEAEQTTASGLLIPDSAQEKPQEGEVVAVGPGRFEDGNRVPVDVAVGDVVIYSKYGGTEVKTGGTEYLVLSARDVLAIVVK</sequence>
<protein>
    <recommendedName>
        <fullName evidence="1">Co-chaperonin GroES</fullName>
    </recommendedName>
    <alternativeName>
        <fullName evidence="1">10 kDa chaperonin</fullName>
    </alternativeName>
    <alternativeName>
        <fullName evidence="1">Chaperonin-10</fullName>
        <shortName evidence="1">Cpn10</shortName>
    </alternativeName>
</protein>
<accession>B8HCE4</accession>
<proteinExistence type="inferred from homology"/>
<keyword id="KW-0143">Chaperone</keyword>
<keyword id="KW-0963">Cytoplasm</keyword>
<evidence type="ECO:0000255" key="1">
    <source>
        <dbReference type="HAMAP-Rule" id="MF_00580"/>
    </source>
</evidence>
<feature type="chain" id="PRO_1000146883" description="Co-chaperonin GroES">
    <location>
        <begin position="1"/>
        <end position="97"/>
    </location>
</feature>